<comment type="function">
    <text evidence="4">Involved in a peptide intake transport system that plays a role in the resistance to antimicrobial peptides.</text>
</comment>
<comment type="subcellular location">
    <subcellularLocation>
        <location evidence="1">Cell inner membrane</location>
        <topology evidence="3">Multi-pass membrane protein</topology>
    </subcellularLocation>
</comment>
<comment type="induction">
    <text evidence="4">Part of the sapA-sapB-sapC-sapD-sapF operon, RNA detected in mid-log phase cells.</text>
</comment>
<comment type="disruption phenotype">
    <text evidence="4">Loss of resistance to protamine.</text>
</comment>
<comment type="similarity">
    <text evidence="6">Belongs to the binding-protein-dependent transport system permease family. OppBC subfamily.</text>
</comment>
<organism>
    <name type="scientific">Salmonella typhimurium (strain LT2 / SGSC1412 / ATCC 700720)</name>
    <dbReference type="NCBI Taxonomy" id="99287"/>
    <lineage>
        <taxon>Bacteria</taxon>
        <taxon>Pseudomonadati</taxon>
        <taxon>Pseudomonadota</taxon>
        <taxon>Gammaproteobacteria</taxon>
        <taxon>Enterobacterales</taxon>
        <taxon>Enterobacteriaceae</taxon>
        <taxon>Salmonella</taxon>
    </lineage>
</organism>
<accession>P0A2J5</accession>
<accession>P36669</accession>
<sequence length="296" mass="31548">MPYDSVYSEKRPPGTLRTAWRKFYSDAPAMVGLYGCAGLALLCIFGGWIAPYGIDQQFLGYQLLPPSWSRYGEVSFFLGTDDLGRDVLSRLLSGAAPTVGGAFIVTLAATLCGLVLGVVAGATHGLRSAVLNHILDTLLSIPSLLLAIIVVAFAGPHLSHAMFAVWLALLPRMVRSVYSMVHDELEKEYVIAARLDGATTLNILWFAILPNITAGLVTEITRALSMAILDIAALGFLDLGAQLPSPEWGAMLGDALELIYVAPWTVMLPGAAITLSVLLVNLLGDGIRRAIIAGVE</sequence>
<proteinExistence type="evidence at transcript level"/>
<feature type="chain" id="PRO_0000060166" description="Peptide transport system permease protein SapC">
    <location>
        <begin position="1"/>
        <end position="296"/>
    </location>
</feature>
<feature type="topological domain" description="Cytoplasmic" evidence="2">
    <location>
        <begin position="1"/>
        <end position="28"/>
    </location>
</feature>
<feature type="transmembrane region" description="Helical" evidence="3">
    <location>
        <begin position="29"/>
        <end position="49"/>
    </location>
</feature>
<feature type="topological domain" description="Periplasmic" evidence="2">
    <location>
        <begin position="50"/>
        <end position="98"/>
    </location>
</feature>
<feature type="transmembrane region" description="Helical" evidence="3">
    <location>
        <begin position="99"/>
        <end position="119"/>
    </location>
</feature>
<feature type="topological domain" description="Cytoplasmic" evidence="2">
    <location>
        <begin position="120"/>
        <end position="133"/>
    </location>
</feature>
<feature type="transmembrane region" description="Helical" evidence="3">
    <location>
        <begin position="134"/>
        <end position="154"/>
    </location>
</feature>
<feature type="topological domain" description="Periplasmic" evidence="2">
    <location>
        <begin position="155"/>
        <end position="196"/>
    </location>
</feature>
<feature type="transmembrane region" description="Helical" evidence="3">
    <location>
        <begin position="197"/>
        <end position="217"/>
    </location>
</feature>
<feature type="topological domain" description="Cytoplasmic" evidence="2">
    <location>
        <begin position="218"/>
        <end position="222"/>
    </location>
</feature>
<feature type="transmembrane region" description="Helical" evidence="3">
    <location>
        <begin position="223"/>
        <end position="243"/>
    </location>
</feature>
<feature type="topological domain" description="Periplasmic" evidence="2">
    <location>
        <begin position="244"/>
        <end position="257"/>
    </location>
</feature>
<feature type="transmembrane region" description="Helical" evidence="3">
    <location>
        <begin position="258"/>
        <end position="278"/>
    </location>
</feature>
<feature type="topological domain" description="Cytoplasmic" evidence="2">
    <location>
        <begin position="279"/>
        <end position="296"/>
    </location>
</feature>
<feature type="domain" description="ABC transmembrane type-1" evidence="3">
    <location>
        <begin position="99"/>
        <end position="284"/>
    </location>
</feature>
<keyword id="KW-0997">Cell inner membrane</keyword>
<keyword id="KW-1003">Cell membrane</keyword>
<keyword id="KW-0472">Membrane</keyword>
<keyword id="KW-0571">Peptide transport</keyword>
<keyword id="KW-0653">Protein transport</keyword>
<keyword id="KW-1185">Reference proteome</keyword>
<keyword id="KW-0812">Transmembrane</keyword>
<keyword id="KW-1133">Transmembrane helix</keyword>
<keyword id="KW-0813">Transport</keyword>
<evidence type="ECO:0000250" key="1"/>
<evidence type="ECO:0000255" key="2"/>
<evidence type="ECO:0000255" key="3">
    <source>
        <dbReference type="PROSITE-ProRule" id="PRU00441"/>
    </source>
</evidence>
<evidence type="ECO:0000269" key="4">
    <source>
    </source>
</evidence>
<evidence type="ECO:0000303" key="5">
    <source>
    </source>
</evidence>
<evidence type="ECO:0000305" key="6"/>
<name>SAPC_SALTY</name>
<gene>
    <name evidence="5" type="primary">sapC</name>
    <name type="ordered locus">STM1694</name>
</gene>
<dbReference type="EMBL" id="X74212">
    <property type="protein sequence ID" value="CAA52286.1"/>
    <property type="molecule type" value="Genomic_DNA"/>
</dbReference>
<dbReference type="EMBL" id="AE006468">
    <property type="protein sequence ID" value="AAL20611.1"/>
    <property type="molecule type" value="Genomic_DNA"/>
</dbReference>
<dbReference type="PIR" id="S39587">
    <property type="entry name" value="S39587"/>
</dbReference>
<dbReference type="RefSeq" id="NP_460652.1">
    <property type="nucleotide sequence ID" value="NC_003197.2"/>
</dbReference>
<dbReference type="RefSeq" id="WP_001146150.1">
    <property type="nucleotide sequence ID" value="NC_003197.2"/>
</dbReference>
<dbReference type="SMR" id="P0A2J5"/>
<dbReference type="STRING" id="99287.STM1694"/>
<dbReference type="TCDB" id="3.A.1.5.5">
    <property type="family name" value="the atp-binding cassette (abc) superfamily"/>
</dbReference>
<dbReference type="PaxDb" id="99287-STM1694"/>
<dbReference type="GeneID" id="1253212"/>
<dbReference type="KEGG" id="stm:STM1694"/>
<dbReference type="PATRIC" id="fig|99287.12.peg.1788"/>
<dbReference type="HOGENOM" id="CLU_028518_1_1_6"/>
<dbReference type="OMA" id="MFGLWCL"/>
<dbReference type="PhylomeDB" id="P0A2J5"/>
<dbReference type="BioCyc" id="SENT99287:STM1694-MONOMER"/>
<dbReference type="Proteomes" id="UP000001014">
    <property type="component" value="Chromosome"/>
</dbReference>
<dbReference type="GO" id="GO:0005886">
    <property type="term" value="C:plasma membrane"/>
    <property type="evidence" value="ECO:0000318"/>
    <property type="project" value="GO_Central"/>
</dbReference>
<dbReference type="GO" id="GO:0015489">
    <property type="term" value="F:putrescine transmembrane transporter activity"/>
    <property type="evidence" value="ECO:0000318"/>
    <property type="project" value="GO_Central"/>
</dbReference>
<dbReference type="GO" id="GO:0015833">
    <property type="term" value="P:peptide transport"/>
    <property type="evidence" value="ECO:0007669"/>
    <property type="project" value="UniProtKB-KW"/>
</dbReference>
<dbReference type="GO" id="GO:0015031">
    <property type="term" value="P:protein transport"/>
    <property type="evidence" value="ECO:0007669"/>
    <property type="project" value="UniProtKB-KW"/>
</dbReference>
<dbReference type="CDD" id="cd06261">
    <property type="entry name" value="TM_PBP2"/>
    <property type="match status" value="1"/>
</dbReference>
<dbReference type="FunFam" id="1.10.3720.10:FF:000019">
    <property type="entry name" value="Antimicrobial peptide ABC transporter permease SapC"/>
    <property type="match status" value="1"/>
</dbReference>
<dbReference type="Gene3D" id="1.10.3720.10">
    <property type="entry name" value="MetI-like"/>
    <property type="match status" value="1"/>
</dbReference>
<dbReference type="InterPro" id="IPR050366">
    <property type="entry name" value="BP-dependent_transpt_permease"/>
</dbReference>
<dbReference type="InterPro" id="IPR000515">
    <property type="entry name" value="MetI-like"/>
</dbReference>
<dbReference type="InterPro" id="IPR035906">
    <property type="entry name" value="MetI-like_sf"/>
</dbReference>
<dbReference type="InterPro" id="IPR025966">
    <property type="entry name" value="OppC_N"/>
</dbReference>
<dbReference type="NCBIfam" id="NF011691">
    <property type="entry name" value="PRK15111.1"/>
    <property type="match status" value="1"/>
</dbReference>
<dbReference type="PANTHER" id="PTHR43386">
    <property type="entry name" value="OLIGOPEPTIDE TRANSPORT SYSTEM PERMEASE PROTEIN APPC"/>
    <property type="match status" value="1"/>
</dbReference>
<dbReference type="PANTHER" id="PTHR43386:SF5">
    <property type="entry name" value="PUTRESCINE EXPORT SYSTEM PERMEASE PROTEIN SAPC"/>
    <property type="match status" value="1"/>
</dbReference>
<dbReference type="Pfam" id="PF00528">
    <property type="entry name" value="BPD_transp_1"/>
    <property type="match status" value="1"/>
</dbReference>
<dbReference type="Pfam" id="PF12911">
    <property type="entry name" value="OppC_N"/>
    <property type="match status" value="1"/>
</dbReference>
<dbReference type="SUPFAM" id="SSF161098">
    <property type="entry name" value="MetI-like"/>
    <property type="match status" value="1"/>
</dbReference>
<dbReference type="PROSITE" id="PS50928">
    <property type="entry name" value="ABC_TM1"/>
    <property type="match status" value="1"/>
</dbReference>
<reference key="1">
    <citation type="journal article" date="1993" name="EMBO J.">
        <title>Molecular genetic analysis of a locus required for resistance to antimicrobial peptides in Salmonella typhimurium.</title>
        <authorList>
            <person name="Parra-Lopez C."/>
            <person name="Baer M.T."/>
            <person name="Groisman E.A."/>
        </authorList>
    </citation>
    <scope>NUCLEOTIDE SEQUENCE [GENOMIC DNA]</scope>
    <scope>FUNCTION</scope>
    <scope>OPERON STRUCTURE</scope>
    <scope>DISRUPTION PHENOTYPE</scope>
    <source>
        <strain>ATCC 14028s / SGSG 2262</strain>
    </source>
</reference>
<reference key="2">
    <citation type="journal article" date="2001" name="Nature">
        <title>Complete genome sequence of Salmonella enterica serovar Typhimurium LT2.</title>
        <authorList>
            <person name="McClelland M."/>
            <person name="Sanderson K.E."/>
            <person name="Spieth J."/>
            <person name="Clifton S.W."/>
            <person name="Latreille P."/>
            <person name="Courtney L."/>
            <person name="Porwollik S."/>
            <person name="Ali J."/>
            <person name="Dante M."/>
            <person name="Du F."/>
            <person name="Hou S."/>
            <person name="Layman D."/>
            <person name="Leonard S."/>
            <person name="Nguyen C."/>
            <person name="Scott K."/>
            <person name="Holmes A."/>
            <person name="Grewal N."/>
            <person name="Mulvaney E."/>
            <person name="Ryan E."/>
            <person name="Sun H."/>
            <person name="Florea L."/>
            <person name="Miller W."/>
            <person name="Stoneking T."/>
            <person name="Nhan M."/>
            <person name="Waterston R."/>
            <person name="Wilson R.K."/>
        </authorList>
    </citation>
    <scope>NUCLEOTIDE SEQUENCE [LARGE SCALE GENOMIC DNA]</scope>
    <source>
        <strain>LT2 / SGSC1412 / ATCC 700720</strain>
    </source>
</reference>
<protein>
    <recommendedName>
        <fullName>Peptide transport system permease protein SapC</fullName>
    </recommendedName>
</protein>